<sequence>MFTINAEVRKEQGKGASRRLRAANKFPAIIYGGKEAPLAIELDHDKVMNMQAKAEFYSEVLTIVVDGKEIKVKAQDVQRHPYKPKLQHIDFVRA</sequence>
<accession>B1IY84</accession>
<feature type="chain" id="PRO_1000086638" description="Large ribosomal subunit protein bL25">
    <location>
        <begin position="1"/>
        <end position="94"/>
    </location>
</feature>
<keyword id="KW-0687">Ribonucleoprotein</keyword>
<keyword id="KW-0689">Ribosomal protein</keyword>
<keyword id="KW-0694">RNA-binding</keyword>
<keyword id="KW-0699">rRNA-binding</keyword>
<organism>
    <name type="scientific">Escherichia coli (strain ATCC 8739 / DSM 1576 / NBRC 3972 / NCIMB 8545 / WDCM 00012 / Crooks)</name>
    <dbReference type="NCBI Taxonomy" id="481805"/>
    <lineage>
        <taxon>Bacteria</taxon>
        <taxon>Pseudomonadati</taxon>
        <taxon>Pseudomonadota</taxon>
        <taxon>Gammaproteobacteria</taxon>
        <taxon>Enterobacterales</taxon>
        <taxon>Enterobacteriaceae</taxon>
        <taxon>Escherichia</taxon>
    </lineage>
</organism>
<reference key="1">
    <citation type="submission" date="2008-02" db="EMBL/GenBank/DDBJ databases">
        <title>Complete sequence of Escherichia coli C str. ATCC 8739.</title>
        <authorList>
            <person name="Copeland A."/>
            <person name="Lucas S."/>
            <person name="Lapidus A."/>
            <person name="Glavina del Rio T."/>
            <person name="Dalin E."/>
            <person name="Tice H."/>
            <person name="Bruce D."/>
            <person name="Goodwin L."/>
            <person name="Pitluck S."/>
            <person name="Kiss H."/>
            <person name="Brettin T."/>
            <person name="Detter J.C."/>
            <person name="Han C."/>
            <person name="Kuske C.R."/>
            <person name="Schmutz J."/>
            <person name="Larimer F."/>
            <person name="Land M."/>
            <person name="Hauser L."/>
            <person name="Kyrpides N."/>
            <person name="Mikhailova N."/>
            <person name="Ingram L."/>
            <person name="Richardson P."/>
        </authorList>
    </citation>
    <scope>NUCLEOTIDE SEQUENCE [LARGE SCALE GENOMIC DNA]</scope>
    <source>
        <strain>ATCC 8739 / DSM 1576 / NBRC 3972 / NCIMB 8545 / WDCM 00012 / Crooks</strain>
    </source>
</reference>
<evidence type="ECO:0000255" key="1">
    <source>
        <dbReference type="HAMAP-Rule" id="MF_01336"/>
    </source>
</evidence>
<evidence type="ECO:0000305" key="2"/>
<gene>
    <name evidence="1" type="primary">rplY</name>
    <name type="ordered locus">EcolC_1462</name>
</gene>
<protein>
    <recommendedName>
        <fullName evidence="1">Large ribosomal subunit protein bL25</fullName>
    </recommendedName>
    <alternativeName>
        <fullName evidence="2">50S ribosomal protein L25</fullName>
    </alternativeName>
</protein>
<comment type="function">
    <text evidence="1">This is one of the proteins that binds to the 5S RNA in the ribosome where it forms part of the central protuberance.</text>
</comment>
<comment type="subunit">
    <text evidence="1">Part of the 50S ribosomal subunit; part of the 5S rRNA/L5/L18/L25 subcomplex. Contacts the 5S rRNA. Binds to the 5S rRNA independently of L5 and L18.</text>
</comment>
<comment type="similarity">
    <text evidence="1">Belongs to the bacterial ribosomal protein bL25 family.</text>
</comment>
<proteinExistence type="inferred from homology"/>
<dbReference type="EMBL" id="CP000946">
    <property type="protein sequence ID" value="ACA77125.1"/>
    <property type="molecule type" value="Genomic_DNA"/>
</dbReference>
<dbReference type="RefSeq" id="WP_000494183.1">
    <property type="nucleotide sequence ID" value="NZ_MTFT01000031.1"/>
</dbReference>
<dbReference type="BMRB" id="B1IY84"/>
<dbReference type="SMR" id="B1IY84"/>
<dbReference type="GeneID" id="93774996"/>
<dbReference type="KEGG" id="ecl:EcolC_1462"/>
<dbReference type="HOGENOM" id="CLU_137946_0_0_6"/>
<dbReference type="GO" id="GO:0022625">
    <property type="term" value="C:cytosolic large ribosomal subunit"/>
    <property type="evidence" value="ECO:0007669"/>
    <property type="project" value="TreeGrafter"/>
</dbReference>
<dbReference type="GO" id="GO:0008097">
    <property type="term" value="F:5S rRNA binding"/>
    <property type="evidence" value="ECO:0007669"/>
    <property type="project" value="InterPro"/>
</dbReference>
<dbReference type="GO" id="GO:0003735">
    <property type="term" value="F:structural constituent of ribosome"/>
    <property type="evidence" value="ECO:0007669"/>
    <property type="project" value="InterPro"/>
</dbReference>
<dbReference type="GO" id="GO:0006412">
    <property type="term" value="P:translation"/>
    <property type="evidence" value="ECO:0007669"/>
    <property type="project" value="UniProtKB-UniRule"/>
</dbReference>
<dbReference type="CDD" id="cd00495">
    <property type="entry name" value="Ribosomal_L25_TL5_CTC"/>
    <property type="match status" value="1"/>
</dbReference>
<dbReference type="FunFam" id="2.40.240.10:FF:000002">
    <property type="entry name" value="50S ribosomal protein L25"/>
    <property type="match status" value="1"/>
</dbReference>
<dbReference type="Gene3D" id="2.40.240.10">
    <property type="entry name" value="Ribosomal Protein L25, Chain P"/>
    <property type="match status" value="1"/>
</dbReference>
<dbReference type="HAMAP" id="MF_01336">
    <property type="entry name" value="Ribosomal_bL25"/>
    <property type="match status" value="1"/>
</dbReference>
<dbReference type="InterPro" id="IPR020056">
    <property type="entry name" value="Rbsml_bL25/Gln-tRNA_synth_N"/>
</dbReference>
<dbReference type="InterPro" id="IPR011035">
    <property type="entry name" value="Ribosomal_bL25/Gln-tRNA_synth"/>
</dbReference>
<dbReference type="InterPro" id="IPR020055">
    <property type="entry name" value="Ribosomal_bL25_short"/>
</dbReference>
<dbReference type="InterPro" id="IPR029751">
    <property type="entry name" value="Ribosomal_L25_dom"/>
</dbReference>
<dbReference type="InterPro" id="IPR020930">
    <property type="entry name" value="Ribosomal_uL5_bac-type"/>
</dbReference>
<dbReference type="NCBIfam" id="NF004612">
    <property type="entry name" value="PRK05943.1"/>
    <property type="match status" value="1"/>
</dbReference>
<dbReference type="PANTHER" id="PTHR33284">
    <property type="entry name" value="RIBOSOMAL PROTEIN L25/GLN-TRNA SYNTHETASE, ANTI-CODON-BINDING DOMAIN-CONTAINING PROTEIN"/>
    <property type="match status" value="1"/>
</dbReference>
<dbReference type="PANTHER" id="PTHR33284:SF1">
    <property type="entry name" value="RIBOSOMAL PROTEIN L25_GLN-TRNA SYNTHETASE, ANTI-CODON-BINDING DOMAIN-CONTAINING PROTEIN"/>
    <property type="match status" value="1"/>
</dbReference>
<dbReference type="Pfam" id="PF01386">
    <property type="entry name" value="Ribosomal_L25p"/>
    <property type="match status" value="1"/>
</dbReference>
<dbReference type="SUPFAM" id="SSF50715">
    <property type="entry name" value="Ribosomal protein L25-like"/>
    <property type="match status" value="1"/>
</dbReference>
<name>RL25_ECOLC</name>